<organism>
    <name type="scientific">Cupriavidus necator (strain ATCC 17699 / DSM 428 / KCTC 22496 / NCIMB 10442 / H16 / Stanier 337)</name>
    <name type="common">Ralstonia eutropha</name>
    <dbReference type="NCBI Taxonomy" id="381666"/>
    <lineage>
        <taxon>Bacteria</taxon>
        <taxon>Pseudomonadati</taxon>
        <taxon>Pseudomonadota</taxon>
        <taxon>Betaproteobacteria</taxon>
        <taxon>Burkholderiales</taxon>
        <taxon>Burkholderiaceae</taxon>
        <taxon>Cupriavidus</taxon>
    </lineage>
</organism>
<name>SAUR_CUPNH</name>
<sequence>MSNHSNAAAVRAFRILEILSAADGPLSLAAIVQAIELPKQTVHRILKQLESTWLVSRTAGNRHYECSSRVRQLAVNVLMQAGPAAARHAILQQLVDKIGETCNLTMLSGDDVVYLDRVETQWPLRMHLQPGSRVPLHCTASGKLLLAFLPSAQRQRLVASLPLRAHSAHTITNAEALHAELAETRQRRLGVNNQENLEGMIAVAVPVMRNRSRACAAIAVQVPMARMTMDQLMGFVPDLRLAADEMVKTFCE</sequence>
<gene>
    <name type="primary">sauR</name>
    <name type="ordered locus">H16_A2746</name>
</gene>
<accession>Q0K846</accession>
<protein>
    <recommendedName>
        <fullName>Probable transcriptional regulator SauR</fullName>
    </recommendedName>
</protein>
<feature type="chain" id="PRO_0000418825" description="Probable transcriptional regulator SauR">
    <location>
        <begin position="1"/>
        <end position="252"/>
    </location>
</feature>
<feature type="domain" description="HTH iclR-type" evidence="1">
    <location>
        <begin position="6"/>
        <end position="68"/>
    </location>
</feature>
<feature type="domain" description="IclR-ED" evidence="2">
    <location>
        <begin position="83"/>
        <end position="252"/>
    </location>
</feature>
<feature type="DNA-binding region" description="H-T-H motif" evidence="1">
    <location>
        <begin position="28"/>
        <end position="47"/>
    </location>
</feature>
<comment type="function">
    <text evidence="3">May regulate transcription of the sauSTU operon.</text>
</comment>
<reference key="1">
    <citation type="journal article" date="2006" name="Nat. Biotechnol.">
        <title>Genome sequence of the bioplastic-producing 'Knallgas' bacterium Ralstonia eutropha H16.</title>
        <authorList>
            <person name="Pohlmann A."/>
            <person name="Fricke W.F."/>
            <person name="Reinecke F."/>
            <person name="Kusian B."/>
            <person name="Liesegang H."/>
            <person name="Cramm R."/>
            <person name="Eitinger T."/>
            <person name="Ewering C."/>
            <person name="Poetter M."/>
            <person name="Schwartz E."/>
            <person name="Strittmatter A."/>
            <person name="Voss I."/>
            <person name="Gottschalk G."/>
            <person name="Steinbuechel A."/>
            <person name="Friedrich B."/>
            <person name="Bowien B."/>
        </authorList>
    </citation>
    <scope>NUCLEOTIDE SEQUENCE [LARGE SCALE GENOMIC DNA]</scope>
    <source>
        <strain>ATCC 17699 / DSM 428 / KCTC 22496 / NCIMB 10442 / H16 / Stanier 337</strain>
    </source>
</reference>
<reference key="2">
    <citation type="journal article" date="2010" name="J. Biol. Chem.">
        <title>Sulfoacetate is degraded via a novel pathway involving sulfoacetyl-CoA and sulfoacetaldehyde in Cupriavidus necator H16.</title>
        <authorList>
            <person name="Weinitschke S."/>
            <person name="Hollemeyer K."/>
            <person name="Kusian B."/>
            <person name="Bowien B."/>
            <person name="Smits T.H."/>
            <person name="Cook A.M."/>
        </authorList>
    </citation>
    <scope>FUNCTION</scope>
    <scope>GENE NAME</scope>
    <source>
        <strain>ATCC 17699 / DSM 428 / KCTC 22496 / NCIMB 10442 / H16 / Stanier 337</strain>
    </source>
</reference>
<evidence type="ECO:0000255" key="1">
    <source>
        <dbReference type="PROSITE-ProRule" id="PRU00393"/>
    </source>
</evidence>
<evidence type="ECO:0000255" key="2">
    <source>
        <dbReference type="PROSITE-ProRule" id="PRU00394"/>
    </source>
</evidence>
<evidence type="ECO:0000269" key="3">
    <source>
    </source>
</evidence>
<dbReference type="EMBL" id="AM260479">
    <property type="protein sequence ID" value="CAJ93825.1"/>
    <property type="molecule type" value="Genomic_DNA"/>
</dbReference>
<dbReference type="RefSeq" id="WP_010813655.1">
    <property type="nucleotide sequence ID" value="NZ_CP039287.1"/>
</dbReference>
<dbReference type="SMR" id="Q0K846"/>
<dbReference type="STRING" id="381666.H16_A2746"/>
<dbReference type="KEGG" id="reh:H16_A2746"/>
<dbReference type="eggNOG" id="COG1414">
    <property type="taxonomic scope" value="Bacteria"/>
</dbReference>
<dbReference type="HOGENOM" id="CLU_062618_6_2_4"/>
<dbReference type="OrthoDB" id="13103at2"/>
<dbReference type="Proteomes" id="UP000008210">
    <property type="component" value="Chromosome 1"/>
</dbReference>
<dbReference type="GO" id="GO:0003677">
    <property type="term" value="F:DNA binding"/>
    <property type="evidence" value="ECO:0007669"/>
    <property type="project" value="UniProtKB-KW"/>
</dbReference>
<dbReference type="GO" id="GO:0003700">
    <property type="term" value="F:DNA-binding transcription factor activity"/>
    <property type="evidence" value="ECO:0007669"/>
    <property type="project" value="TreeGrafter"/>
</dbReference>
<dbReference type="GO" id="GO:0045892">
    <property type="term" value="P:negative regulation of DNA-templated transcription"/>
    <property type="evidence" value="ECO:0007669"/>
    <property type="project" value="TreeGrafter"/>
</dbReference>
<dbReference type="Gene3D" id="3.30.450.40">
    <property type="match status" value="1"/>
</dbReference>
<dbReference type="Gene3D" id="1.10.10.10">
    <property type="entry name" value="Winged helix-like DNA-binding domain superfamily/Winged helix DNA-binding domain"/>
    <property type="match status" value="1"/>
</dbReference>
<dbReference type="InterPro" id="IPR029016">
    <property type="entry name" value="GAF-like_dom_sf"/>
</dbReference>
<dbReference type="InterPro" id="IPR050707">
    <property type="entry name" value="HTH_MetabolicPath_Reg"/>
</dbReference>
<dbReference type="InterPro" id="IPR014757">
    <property type="entry name" value="Tscrpt_reg_IclR_C"/>
</dbReference>
<dbReference type="InterPro" id="IPR005471">
    <property type="entry name" value="Tscrpt_reg_IclR_N"/>
</dbReference>
<dbReference type="InterPro" id="IPR036388">
    <property type="entry name" value="WH-like_DNA-bd_sf"/>
</dbReference>
<dbReference type="InterPro" id="IPR036390">
    <property type="entry name" value="WH_DNA-bd_sf"/>
</dbReference>
<dbReference type="PANTHER" id="PTHR30136">
    <property type="entry name" value="HELIX-TURN-HELIX TRANSCRIPTIONAL REGULATOR, ICLR FAMILY"/>
    <property type="match status" value="1"/>
</dbReference>
<dbReference type="PANTHER" id="PTHR30136:SF24">
    <property type="entry name" value="HTH-TYPE TRANSCRIPTIONAL REPRESSOR ALLR"/>
    <property type="match status" value="1"/>
</dbReference>
<dbReference type="Pfam" id="PF09339">
    <property type="entry name" value="HTH_IclR"/>
    <property type="match status" value="1"/>
</dbReference>
<dbReference type="Pfam" id="PF01614">
    <property type="entry name" value="IclR_C"/>
    <property type="match status" value="1"/>
</dbReference>
<dbReference type="SMART" id="SM00346">
    <property type="entry name" value="HTH_ICLR"/>
    <property type="match status" value="1"/>
</dbReference>
<dbReference type="SUPFAM" id="SSF55781">
    <property type="entry name" value="GAF domain-like"/>
    <property type="match status" value="1"/>
</dbReference>
<dbReference type="SUPFAM" id="SSF46785">
    <property type="entry name" value="Winged helix' DNA-binding domain"/>
    <property type="match status" value="1"/>
</dbReference>
<dbReference type="PROSITE" id="PS51077">
    <property type="entry name" value="HTH_ICLR"/>
    <property type="match status" value="1"/>
</dbReference>
<dbReference type="PROSITE" id="PS51078">
    <property type="entry name" value="ICLR_ED"/>
    <property type="match status" value="1"/>
</dbReference>
<proteinExistence type="predicted"/>
<keyword id="KW-0238">DNA-binding</keyword>
<keyword id="KW-1185">Reference proteome</keyword>
<keyword id="KW-0804">Transcription</keyword>
<keyword id="KW-0805">Transcription regulation</keyword>